<accession>Q92GI1</accession>
<proteinExistence type="inferred from homology"/>
<sequence>MINVEIVRNYNKWREHKQINKSLIKKITQNILLRFDNFSKIKQFELSILLTNAAEILTLNKQFRNIEKATNVLSFPSNELNWQDLYSKLEFLGDSDYMHLGDIAFCYEVIYNESCEQHKTFENHFIHLLIHSILHLIGFDHQNDTEANIMENLEIEILSYFGIFPPY</sequence>
<name>YBEY_RICCN</name>
<protein>
    <recommendedName>
        <fullName evidence="1">Endoribonuclease YbeY</fullName>
        <ecNumber evidence="1">3.1.-.-</ecNumber>
    </recommendedName>
</protein>
<evidence type="ECO:0000255" key="1">
    <source>
        <dbReference type="HAMAP-Rule" id="MF_00009"/>
    </source>
</evidence>
<dbReference type="EC" id="3.1.-.-" evidence="1"/>
<dbReference type="EMBL" id="AE006914">
    <property type="protein sequence ID" value="AAL03680.1"/>
    <property type="molecule type" value="Genomic_DNA"/>
</dbReference>
<dbReference type="PIR" id="F97842">
    <property type="entry name" value="F97842"/>
</dbReference>
<dbReference type="RefSeq" id="WP_010977713.1">
    <property type="nucleotide sequence ID" value="NC_003103.1"/>
</dbReference>
<dbReference type="SMR" id="Q92GI1"/>
<dbReference type="GeneID" id="928292"/>
<dbReference type="KEGG" id="rco:RC1142"/>
<dbReference type="HOGENOM" id="CLU_106710_0_0_5"/>
<dbReference type="Proteomes" id="UP000000816">
    <property type="component" value="Chromosome"/>
</dbReference>
<dbReference type="GO" id="GO:0005737">
    <property type="term" value="C:cytoplasm"/>
    <property type="evidence" value="ECO:0007669"/>
    <property type="project" value="UniProtKB-SubCell"/>
</dbReference>
<dbReference type="GO" id="GO:0004222">
    <property type="term" value="F:metalloendopeptidase activity"/>
    <property type="evidence" value="ECO:0007669"/>
    <property type="project" value="InterPro"/>
</dbReference>
<dbReference type="GO" id="GO:0004521">
    <property type="term" value="F:RNA endonuclease activity"/>
    <property type="evidence" value="ECO:0007669"/>
    <property type="project" value="UniProtKB-UniRule"/>
</dbReference>
<dbReference type="GO" id="GO:0008270">
    <property type="term" value="F:zinc ion binding"/>
    <property type="evidence" value="ECO:0007669"/>
    <property type="project" value="UniProtKB-UniRule"/>
</dbReference>
<dbReference type="GO" id="GO:0006364">
    <property type="term" value="P:rRNA processing"/>
    <property type="evidence" value="ECO:0007669"/>
    <property type="project" value="UniProtKB-UniRule"/>
</dbReference>
<dbReference type="Gene3D" id="3.40.390.30">
    <property type="entry name" value="Metalloproteases ('zincins'), catalytic domain"/>
    <property type="match status" value="1"/>
</dbReference>
<dbReference type="HAMAP" id="MF_00009">
    <property type="entry name" value="Endoribonucl_YbeY"/>
    <property type="match status" value="1"/>
</dbReference>
<dbReference type="InterPro" id="IPR023091">
    <property type="entry name" value="MetalPrtase_cat_dom_sf_prd"/>
</dbReference>
<dbReference type="InterPro" id="IPR002036">
    <property type="entry name" value="YbeY"/>
</dbReference>
<dbReference type="InterPro" id="IPR020549">
    <property type="entry name" value="YbeY_CS"/>
</dbReference>
<dbReference type="NCBIfam" id="TIGR00043">
    <property type="entry name" value="rRNA maturation RNase YbeY"/>
    <property type="match status" value="1"/>
</dbReference>
<dbReference type="PANTHER" id="PTHR46986">
    <property type="entry name" value="ENDORIBONUCLEASE YBEY, CHLOROPLASTIC"/>
    <property type="match status" value="1"/>
</dbReference>
<dbReference type="PANTHER" id="PTHR46986:SF1">
    <property type="entry name" value="ENDORIBONUCLEASE YBEY, CHLOROPLASTIC"/>
    <property type="match status" value="1"/>
</dbReference>
<dbReference type="Pfam" id="PF02130">
    <property type="entry name" value="YbeY"/>
    <property type="match status" value="1"/>
</dbReference>
<dbReference type="SUPFAM" id="SSF55486">
    <property type="entry name" value="Metalloproteases ('zincins'), catalytic domain"/>
    <property type="match status" value="1"/>
</dbReference>
<dbReference type="PROSITE" id="PS01306">
    <property type="entry name" value="UPF0054"/>
    <property type="match status" value="1"/>
</dbReference>
<comment type="function">
    <text evidence="1">Single strand-specific metallo-endoribonuclease involved in late-stage 70S ribosome quality control and in maturation of the 3' terminus of the 16S rRNA.</text>
</comment>
<comment type="cofactor">
    <cofactor evidence="1">
        <name>Zn(2+)</name>
        <dbReference type="ChEBI" id="CHEBI:29105"/>
    </cofactor>
    <text evidence="1">Binds 1 zinc ion.</text>
</comment>
<comment type="subcellular location">
    <subcellularLocation>
        <location evidence="1">Cytoplasm</location>
    </subcellularLocation>
</comment>
<comment type="similarity">
    <text evidence="1">Belongs to the endoribonuclease YbeY family.</text>
</comment>
<reference key="1">
    <citation type="journal article" date="2001" name="Science">
        <title>Mechanisms of evolution in Rickettsia conorii and R. prowazekii.</title>
        <authorList>
            <person name="Ogata H."/>
            <person name="Audic S."/>
            <person name="Renesto-Audiffren P."/>
            <person name="Fournier P.-E."/>
            <person name="Barbe V."/>
            <person name="Samson D."/>
            <person name="Roux V."/>
            <person name="Cossart P."/>
            <person name="Weissenbach J."/>
            <person name="Claverie J.-M."/>
            <person name="Raoult D."/>
        </authorList>
    </citation>
    <scope>NUCLEOTIDE SEQUENCE [LARGE SCALE GENOMIC DNA]</scope>
    <source>
        <strain>ATCC VR-613 / Malish 7</strain>
    </source>
</reference>
<organism>
    <name type="scientific">Rickettsia conorii (strain ATCC VR-613 / Malish 7)</name>
    <dbReference type="NCBI Taxonomy" id="272944"/>
    <lineage>
        <taxon>Bacteria</taxon>
        <taxon>Pseudomonadati</taxon>
        <taxon>Pseudomonadota</taxon>
        <taxon>Alphaproteobacteria</taxon>
        <taxon>Rickettsiales</taxon>
        <taxon>Rickettsiaceae</taxon>
        <taxon>Rickettsieae</taxon>
        <taxon>Rickettsia</taxon>
        <taxon>spotted fever group</taxon>
    </lineage>
</organism>
<keyword id="KW-0963">Cytoplasm</keyword>
<keyword id="KW-0255">Endonuclease</keyword>
<keyword id="KW-0378">Hydrolase</keyword>
<keyword id="KW-0479">Metal-binding</keyword>
<keyword id="KW-0540">Nuclease</keyword>
<keyword id="KW-0690">Ribosome biogenesis</keyword>
<keyword id="KW-0698">rRNA processing</keyword>
<keyword id="KW-0862">Zinc</keyword>
<gene>
    <name evidence="1" type="primary">ybeY</name>
    <name type="ordered locus">RC1142</name>
</gene>
<feature type="chain" id="PRO_0000102518" description="Endoribonuclease YbeY">
    <location>
        <begin position="1"/>
        <end position="167"/>
    </location>
</feature>
<feature type="binding site" evidence="1">
    <location>
        <position position="131"/>
    </location>
    <ligand>
        <name>Zn(2+)</name>
        <dbReference type="ChEBI" id="CHEBI:29105"/>
        <note>catalytic</note>
    </ligand>
</feature>
<feature type="binding site" evidence="1">
    <location>
        <position position="135"/>
    </location>
    <ligand>
        <name>Zn(2+)</name>
        <dbReference type="ChEBI" id="CHEBI:29105"/>
        <note>catalytic</note>
    </ligand>
</feature>
<feature type="binding site" evidence="1">
    <location>
        <position position="141"/>
    </location>
    <ligand>
        <name>Zn(2+)</name>
        <dbReference type="ChEBI" id="CHEBI:29105"/>
        <note>catalytic</note>
    </ligand>
</feature>